<reference key="1">
    <citation type="journal article" date="1995" name="DNA Res.">
        <title>Sequence analysis of the genome of the unicellular cyanobacterium Synechocystis sp. strain PCC6803. I. Sequence features in the 1 Mb region from map positions 64% to 92% of the genome.</title>
        <authorList>
            <person name="Kaneko T."/>
            <person name="Tanaka A."/>
            <person name="Sato S."/>
            <person name="Kotani H."/>
            <person name="Sazuka T."/>
            <person name="Miyajima N."/>
            <person name="Sugiura M."/>
            <person name="Tabata S."/>
        </authorList>
    </citation>
    <scope>NUCLEOTIDE SEQUENCE [LARGE SCALE GENOMIC DNA]</scope>
    <source>
        <strain>ATCC 27184 / PCC 6803 / N-1</strain>
    </source>
</reference>
<reference key="2">
    <citation type="journal article" date="1996" name="DNA Res.">
        <title>Sequence analysis of the genome of the unicellular cyanobacterium Synechocystis sp. strain PCC6803. II. Sequence determination of the entire genome and assignment of potential protein-coding regions.</title>
        <authorList>
            <person name="Kaneko T."/>
            <person name="Sato S."/>
            <person name="Kotani H."/>
            <person name="Tanaka A."/>
            <person name="Asamizu E."/>
            <person name="Nakamura Y."/>
            <person name="Miyajima N."/>
            <person name="Hirosawa M."/>
            <person name="Sugiura M."/>
            <person name="Sasamoto S."/>
            <person name="Kimura T."/>
            <person name="Hosouchi T."/>
            <person name="Matsuno A."/>
            <person name="Muraki A."/>
            <person name="Nakazaki N."/>
            <person name="Naruo K."/>
            <person name="Okumura S."/>
            <person name="Shimpo S."/>
            <person name="Takeuchi C."/>
            <person name="Wada T."/>
            <person name="Watanabe A."/>
            <person name="Yamada M."/>
            <person name="Yasuda M."/>
            <person name="Tabata S."/>
        </authorList>
    </citation>
    <scope>NUCLEOTIDE SEQUENCE [LARGE SCALE GENOMIC DNA]</scope>
    <source>
        <strain>ATCC 27184 / PCC 6803 / Kazusa</strain>
    </source>
</reference>
<reference key="3">
    <citation type="journal article" date="1989" name="Mol. Microbiol.">
        <title>Molecular and genetical analysis of the fructose-glucose transport system in the cyanobacterium Synechocystis PCC6803.</title>
        <authorList>
            <person name="Zhang C.C."/>
            <person name="Durand M.C."/>
            <person name="Jeanjean R."/>
            <person name="Joset F."/>
        </authorList>
    </citation>
    <scope>NUCLEOTIDE SEQUENCE [GENOMIC DNA] OF 1-395</scope>
</reference>
<protein>
    <recommendedName>
        <fullName>Uncharacterized protein sll0772</fullName>
    </recommendedName>
</protein>
<organism>
    <name type="scientific">Synechocystis sp. (strain ATCC 27184 / PCC 6803 / Kazusa)</name>
    <dbReference type="NCBI Taxonomy" id="1111708"/>
    <lineage>
        <taxon>Bacteria</taxon>
        <taxon>Bacillati</taxon>
        <taxon>Cyanobacteriota</taxon>
        <taxon>Cyanophyceae</taxon>
        <taxon>Synechococcales</taxon>
        <taxon>Merismopediaceae</taxon>
        <taxon>Synechocystis</taxon>
    </lineage>
</organism>
<sequence>MGLICGLAIASGLTVTIPSEAQTISVNEFFPPVNRYQLGASNLGNGVNQVTSVAELRDVQPSDWAFAALQSLVERYGCLVGYPDRTYRGDAEGTLRARPLSRYEFAAGLNACLNTIEQLLQENVSVAQGDLDLLKKLAQDFQAELKQLAVRVDNLETRTAFLEDHQFSVTTKLYGQTITSLDKVFGDRVGGGSNEFQTQFAYRVRFNLETSFTGKDLFRTRLQFSNFLNGVEQTGTNMTRFNYDDNSNNNVEVSHLWYRTPLTDNLTLRLGTVGVGYTDLVDTLTPPTIADDALGIPSRFGEYDPVYRRGGGGAGFNWQITPTVQLSVGYLATNPNDPDPGNGLFNGGYHTLAQLAYQTADGGIGFTYSRSYFPAGNTDLMAGTGSLLAIQPFGEVIATAGNFYTLQGYYRITPHVQIHGWGGFVEAQAQGGGLSNLSNGVGGTVLRDVSWNSSAIWYGLVGISFPDVGGEGNLPGIALGIPPTVTASNLPGAVGQTTPYHLEAFYRIQLNDNISITPGFWVVLNPEANSNNATQYVGHIRTSFLF</sequence>
<name>Y772_SYNY3</name>
<proteinExistence type="inferred from homology"/>
<gene>
    <name type="ordered locus">sll0772</name>
</gene>
<accession>P15730</accession>
<accession>Q55609</accession>
<evidence type="ECO:0000255" key="1">
    <source>
        <dbReference type="PROSITE-ProRule" id="PRU00777"/>
    </source>
</evidence>
<evidence type="ECO:0000305" key="2"/>
<keyword id="KW-1185">Reference proteome</keyword>
<comment type="similarity">
    <text evidence="2">Belongs to the OprB family.</text>
</comment>
<comment type="sequence caution" evidence="2">
    <conflict type="erroneous initiation">
        <sequence resource="EMBL-CDS" id="BAA10116"/>
    </conflict>
</comment>
<feature type="chain" id="PRO_0000205337" description="Uncharacterized protein sll0772">
    <location>
        <begin position="1"/>
        <end position="546"/>
    </location>
</feature>
<feature type="domain" description="SLH" evidence="1">
    <location>
        <begin position="52"/>
        <end position="123"/>
    </location>
</feature>
<feature type="sequence conflict" description="In Ref. 3; CAA34120." evidence="2" ref="3">
    <original>G</original>
    <variation>A</variation>
    <location>
        <position position="363"/>
    </location>
</feature>
<feature type="sequence conflict" description="In Ref. 3; CAA34120." evidence="2" ref="3">
    <original>FGE</original>
    <variation>SER</variation>
    <location>
        <begin position="393"/>
        <end position="395"/>
    </location>
</feature>
<dbReference type="EMBL" id="BA000022">
    <property type="protein sequence ID" value="BAA10116.1"/>
    <property type="status" value="ALT_INIT"/>
    <property type="molecule type" value="Genomic_DNA"/>
</dbReference>
<dbReference type="EMBL" id="X15988">
    <property type="protein sequence ID" value="CAA34120.1"/>
    <property type="molecule type" value="Genomic_DNA"/>
</dbReference>
<dbReference type="PIR" id="S76264">
    <property type="entry name" value="S76264"/>
</dbReference>
<dbReference type="SMR" id="P15730"/>
<dbReference type="STRING" id="1148.gene:10499608"/>
<dbReference type="TCDB" id="1.B.23.1.25">
    <property type="family name" value="the cyanobacterial porin (cbp) family"/>
</dbReference>
<dbReference type="PaxDb" id="1148-1001491"/>
<dbReference type="EnsemblBacteria" id="BAA10116">
    <property type="protein sequence ID" value="BAA10116"/>
    <property type="gene ID" value="BAA10116"/>
</dbReference>
<dbReference type="KEGG" id="syn:sll0772"/>
<dbReference type="eggNOG" id="COG3659">
    <property type="taxonomic scope" value="Bacteria"/>
</dbReference>
<dbReference type="InParanoid" id="P15730"/>
<dbReference type="PhylomeDB" id="P15730"/>
<dbReference type="Proteomes" id="UP000001425">
    <property type="component" value="Chromosome"/>
</dbReference>
<dbReference type="GO" id="GO:0016020">
    <property type="term" value="C:membrane"/>
    <property type="evidence" value="ECO:0007669"/>
    <property type="project" value="InterPro"/>
</dbReference>
<dbReference type="GO" id="GO:0015288">
    <property type="term" value="F:porin activity"/>
    <property type="evidence" value="ECO:0007669"/>
    <property type="project" value="InterPro"/>
</dbReference>
<dbReference type="GO" id="GO:0008643">
    <property type="term" value="P:carbohydrate transport"/>
    <property type="evidence" value="ECO:0007669"/>
    <property type="project" value="InterPro"/>
</dbReference>
<dbReference type="Gene3D" id="2.40.160.180">
    <property type="entry name" value="Carbohydrate-selective porin OprB"/>
    <property type="match status" value="1"/>
</dbReference>
<dbReference type="InterPro" id="IPR007049">
    <property type="entry name" value="Carb-sel_porin_OprB"/>
</dbReference>
<dbReference type="InterPro" id="IPR051465">
    <property type="entry name" value="Cell_Envelope_Struct_Comp"/>
</dbReference>
<dbReference type="InterPro" id="IPR038673">
    <property type="entry name" value="OprB_sf"/>
</dbReference>
<dbReference type="InterPro" id="IPR047684">
    <property type="entry name" value="Por_som-like"/>
</dbReference>
<dbReference type="InterPro" id="IPR001119">
    <property type="entry name" value="SLH_dom"/>
</dbReference>
<dbReference type="NCBIfam" id="NF033921">
    <property type="entry name" value="por_somb"/>
    <property type="match status" value="1"/>
</dbReference>
<dbReference type="PANTHER" id="PTHR43308:SF1">
    <property type="entry name" value="OUTER MEMBRANE PROTEIN ALPHA"/>
    <property type="match status" value="1"/>
</dbReference>
<dbReference type="PANTHER" id="PTHR43308">
    <property type="entry name" value="OUTER MEMBRANE PROTEIN ALPHA-RELATED"/>
    <property type="match status" value="1"/>
</dbReference>
<dbReference type="Pfam" id="PF04966">
    <property type="entry name" value="OprB"/>
    <property type="match status" value="1"/>
</dbReference>
<dbReference type="PROSITE" id="PS51272">
    <property type="entry name" value="SLH"/>
    <property type="match status" value="1"/>
</dbReference>